<accession>Q5JF63</accession>
<proteinExistence type="inferred from homology"/>
<gene>
    <name evidence="1" type="primary">tyrS</name>
    <name type="ordered locus">TK0568</name>
</gene>
<organism>
    <name type="scientific">Thermococcus kodakarensis (strain ATCC BAA-918 / JCM 12380 / KOD1)</name>
    <name type="common">Pyrococcus kodakaraensis (strain KOD1)</name>
    <dbReference type="NCBI Taxonomy" id="69014"/>
    <lineage>
        <taxon>Archaea</taxon>
        <taxon>Methanobacteriati</taxon>
        <taxon>Methanobacteriota</taxon>
        <taxon>Thermococci</taxon>
        <taxon>Thermococcales</taxon>
        <taxon>Thermococcaceae</taxon>
        <taxon>Thermococcus</taxon>
    </lineage>
</organism>
<evidence type="ECO:0000255" key="1">
    <source>
        <dbReference type="HAMAP-Rule" id="MF_02009"/>
    </source>
</evidence>
<comment type="function">
    <text evidence="1">Catalyzes the attachment of tyrosine to tRNA(Tyr) in a two-step reaction: tyrosine is first activated by ATP to form Tyr-AMP and then transferred to the acceptor end of tRNA(Tyr).</text>
</comment>
<comment type="catalytic activity">
    <reaction evidence="1">
        <text>tRNA(Tyr) + L-tyrosine + ATP = L-tyrosyl-tRNA(Tyr) + AMP + diphosphate + H(+)</text>
        <dbReference type="Rhea" id="RHEA:10220"/>
        <dbReference type="Rhea" id="RHEA-COMP:9706"/>
        <dbReference type="Rhea" id="RHEA-COMP:9707"/>
        <dbReference type="ChEBI" id="CHEBI:15378"/>
        <dbReference type="ChEBI" id="CHEBI:30616"/>
        <dbReference type="ChEBI" id="CHEBI:33019"/>
        <dbReference type="ChEBI" id="CHEBI:58315"/>
        <dbReference type="ChEBI" id="CHEBI:78442"/>
        <dbReference type="ChEBI" id="CHEBI:78536"/>
        <dbReference type="ChEBI" id="CHEBI:456215"/>
        <dbReference type="EC" id="6.1.1.1"/>
    </reaction>
</comment>
<comment type="subunit">
    <text evidence="1">Homodimer.</text>
</comment>
<comment type="subcellular location">
    <subcellularLocation>
        <location evidence="1">Cytoplasm</location>
    </subcellularLocation>
</comment>
<comment type="similarity">
    <text evidence="1">Belongs to the class-I aminoacyl-tRNA synthetase family. TyrS type 4 subfamily.</text>
</comment>
<sequence length="375" mass="43187">MDIERKIELIKKKPTEELLTEENLRHLLEVGAPLQHYIGFEISGYIHLGTGLMAGAKIADLQKAGVKTRIFLADWHSWINDKLGGDLEVIQKVALTYFKEGMKQSIKVMGGDPDKVEFVLASEILDKGDYWQTVIDISKNVTLARMLRSITIMGRQMGEAIDFAKLIYPAMQVADIFYQGVTIAHAGMDQRKAHVIAIEVAQKLKYHPLEWKGEKLKPVALHHHLLLGLQEPPVWPIESEEQFKELKTQMKMSKSKPYSAVFIHDSPEEIKQKLRKAFCPAREVKYNPVLDWAEYIIFREEPTEFTIHRPAKFGGDVTYTTFEELKKDFAEGKLHPLDLKNAVAEYLIELLKPVREYFEKHPEPLELMREIKITR</sequence>
<dbReference type="EC" id="6.1.1.1" evidence="1"/>
<dbReference type="EMBL" id="AP006878">
    <property type="protein sequence ID" value="BAD84757.1"/>
    <property type="molecule type" value="Genomic_DNA"/>
</dbReference>
<dbReference type="RefSeq" id="WP_011249523.1">
    <property type="nucleotide sequence ID" value="NC_006624.1"/>
</dbReference>
<dbReference type="SMR" id="Q5JF63"/>
<dbReference type="FunCoup" id="Q5JF63">
    <property type="interactions" value="210"/>
</dbReference>
<dbReference type="IntAct" id="Q5JF63">
    <property type="interactions" value="1"/>
</dbReference>
<dbReference type="MINT" id="Q5JF63"/>
<dbReference type="STRING" id="69014.TK0568"/>
<dbReference type="EnsemblBacteria" id="BAD84757">
    <property type="protein sequence ID" value="BAD84757"/>
    <property type="gene ID" value="TK0568"/>
</dbReference>
<dbReference type="GeneID" id="78447082"/>
<dbReference type="KEGG" id="tko:TK0568"/>
<dbReference type="PATRIC" id="fig|69014.16.peg.555"/>
<dbReference type="eggNOG" id="arCOG01886">
    <property type="taxonomic scope" value="Archaea"/>
</dbReference>
<dbReference type="HOGENOM" id="CLU_035267_1_1_2"/>
<dbReference type="InParanoid" id="Q5JF63"/>
<dbReference type="OrthoDB" id="8389at2157"/>
<dbReference type="PhylomeDB" id="Q5JF63"/>
<dbReference type="Proteomes" id="UP000000536">
    <property type="component" value="Chromosome"/>
</dbReference>
<dbReference type="GO" id="GO:0005737">
    <property type="term" value="C:cytoplasm"/>
    <property type="evidence" value="ECO:0000318"/>
    <property type="project" value="GO_Central"/>
</dbReference>
<dbReference type="GO" id="GO:0005524">
    <property type="term" value="F:ATP binding"/>
    <property type="evidence" value="ECO:0007669"/>
    <property type="project" value="UniProtKB-UniRule"/>
</dbReference>
<dbReference type="GO" id="GO:0004831">
    <property type="term" value="F:tyrosine-tRNA ligase activity"/>
    <property type="evidence" value="ECO:0000318"/>
    <property type="project" value="GO_Central"/>
</dbReference>
<dbReference type="GO" id="GO:0006437">
    <property type="term" value="P:tyrosyl-tRNA aminoacylation"/>
    <property type="evidence" value="ECO:0000318"/>
    <property type="project" value="GO_Central"/>
</dbReference>
<dbReference type="Gene3D" id="3.40.50.620">
    <property type="entry name" value="HUPs"/>
    <property type="match status" value="1"/>
</dbReference>
<dbReference type="Gene3D" id="1.10.240.10">
    <property type="entry name" value="Tyrosyl-Transfer RNA Synthetase"/>
    <property type="match status" value="1"/>
</dbReference>
<dbReference type="HAMAP" id="MF_02009">
    <property type="entry name" value="Tyr_tRNA_synth_type4"/>
    <property type="match status" value="1"/>
</dbReference>
<dbReference type="InterPro" id="IPR002305">
    <property type="entry name" value="aa-tRNA-synth_Ic"/>
</dbReference>
<dbReference type="InterPro" id="IPR014729">
    <property type="entry name" value="Rossmann-like_a/b/a_fold"/>
</dbReference>
<dbReference type="InterPro" id="IPR002307">
    <property type="entry name" value="Tyr-tRNA-ligase"/>
</dbReference>
<dbReference type="InterPro" id="IPR023678">
    <property type="entry name" value="Tyr-tRNA-ligase_4"/>
</dbReference>
<dbReference type="InterPro" id="IPR023617">
    <property type="entry name" value="Tyr-tRNA-ligase_arc/euk-type"/>
</dbReference>
<dbReference type="InterPro" id="IPR050489">
    <property type="entry name" value="Tyr-tRNA_synthase"/>
</dbReference>
<dbReference type="NCBIfam" id="NF006330">
    <property type="entry name" value="PRK08560.1"/>
    <property type="match status" value="1"/>
</dbReference>
<dbReference type="NCBIfam" id="TIGR00234">
    <property type="entry name" value="tyrS"/>
    <property type="match status" value="1"/>
</dbReference>
<dbReference type="PANTHER" id="PTHR46264:SF4">
    <property type="entry name" value="TYROSINE--TRNA LIGASE, CYTOPLASMIC"/>
    <property type="match status" value="1"/>
</dbReference>
<dbReference type="PANTHER" id="PTHR46264">
    <property type="entry name" value="TYROSINE-TRNA LIGASE"/>
    <property type="match status" value="1"/>
</dbReference>
<dbReference type="Pfam" id="PF00579">
    <property type="entry name" value="tRNA-synt_1b"/>
    <property type="match status" value="1"/>
</dbReference>
<dbReference type="PIRSF" id="PIRSF006588">
    <property type="entry name" value="TyrRS_arch_euk"/>
    <property type="match status" value="1"/>
</dbReference>
<dbReference type="SUPFAM" id="SSF52374">
    <property type="entry name" value="Nucleotidylyl transferase"/>
    <property type="match status" value="1"/>
</dbReference>
<name>SYY_THEKO</name>
<keyword id="KW-0030">Aminoacyl-tRNA synthetase</keyword>
<keyword id="KW-0067">ATP-binding</keyword>
<keyword id="KW-0963">Cytoplasm</keyword>
<keyword id="KW-0436">Ligase</keyword>
<keyword id="KW-0547">Nucleotide-binding</keyword>
<keyword id="KW-0648">Protein biosynthesis</keyword>
<keyword id="KW-1185">Reference proteome</keyword>
<feature type="chain" id="PRO_0000240270" description="Tyrosine--tRNA ligase">
    <location>
        <begin position="1"/>
        <end position="375"/>
    </location>
</feature>
<feature type="short sequence motif" description="'KMSKS' region">
    <location>
        <begin position="251"/>
        <end position="255"/>
    </location>
</feature>
<feature type="binding site" evidence="1">
    <location>
        <position position="37"/>
    </location>
    <ligand>
        <name>L-tyrosine</name>
        <dbReference type="ChEBI" id="CHEBI:58315"/>
    </ligand>
</feature>
<feature type="binding site" evidence="1">
    <location>
        <position position="168"/>
    </location>
    <ligand>
        <name>L-tyrosine</name>
        <dbReference type="ChEBI" id="CHEBI:58315"/>
    </ligand>
</feature>
<feature type="binding site" evidence="1">
    <location>
        <position position="172"/>
    </location>
    <ligand>
        <name>L-tyrosine</name>
        <dbReference type="ChEBI" id="CHEBI:58315"/>
    </ligand>
</feature>
<feature type="binding site" evidence="1">
    <location>
        <position position="175"/>
    </location>
    <ligand>
        <name>L-tyrosine</name>
        <dbReference type="ChEBI" id="CHEBI:58315"/>
    </ligand>
</feature>
<feature type="binding site" evidence="1">
    <location>
        <position position="190"/>
    </location>
    <ligand>
        <name>L-tyrosine</name>
        <dbReference type="ChEBI" id="CHEBI:58315"/>
    </ligand>
</feature>
<feature type="binding site" evidence="1">
    <location>
        <position position="254"/>
    </location>
    <ligand>
        <name>ATP</name>
        <dbReference type="ChEBI" id="CHEBI:30616"/>
    </ligand>
</feature>
<reference key="1">
    <citation type="journal article" date="2005" name="Genome Res.">
        <title>Complete genome sequence of the hyperthermophilic archaeon Thermococcus kodakaraensis KOD1 and comparison with Pyrococcus genomes.</title>
        <authorList>
            <person name="Fukui T."/>
            <person name="Atomi H."/>
            <person name="Kanai T."/>
            <person name="Matsumi R."/>
            <person name="Fujiwara S."/>
            <person name="Imanaka T."/>
        </authorList>
    </citation>
    <scope>NUCLEOTIDE SEQUENCE [LARGE SCALE GENOMIC DNA]</scope>
    <source>
        <strain>ATCC BAA-918 / JCM 12380 / KOD1</strain>
    </source>
</reference>
<protein>
    <recommendedName>
        <fullName evidence="1">Tyrosine--tRNA ligase</fullName>
        <ecNumber evidence="1">6.1.1.1</ecNumber>
    </recommendedName>
    <alternativeName>
        <fullName evidence="1">Tyrosyl-tRNA synthetase</fullName>
        <shortName evidence="1">TyrRS</shortName>
    </alternativeName>
</protein>